<proteinExistence type="inferred from homology"/>
<protein>
    <recommendedName>
        <fullName evidence="1">Tyrosine recombinase XerD</fullName>
    </recommendedName>
</protein>
<gene>
    <name evidence="1" type="primary">xerD</name>
    <name type="ordered locus">CPn_1024</name>
    <name type="ordered locus">CP_0828</name>
    <name type="ordered locus">CpB1063</name>
</gene>
<comment type="function">
    <text evidence="1">Site-specific tyrosine recombinase, which acts by catalyzing the cutting and rejoining of the recombining DNA molecules. The XerC-XerD complex is essential to convert dimers of the bacterial chromosome into monomers to permit their segregation at cell division. It also contributes to the segregational stability of plasmids.</text>
</comment>
<comment type="subunit">
    <text evidence="1">Forms a cyclic heterotetrameric complex composed of two molecules of XerC and two molecules of XerD.</text>
</comment>
<comment type="subcellular location">
    <subcellularLocation>
        <location evidence="1">Cytoplasm</location>
    </subcellularLocation>
</comment>
<comment type="similarity">
    <text evidence="1">Belongs to the 'phage' integrase family. XerD subfamily.</text>
</comment>
<comment type="sequence caution" evidence="4">
    <conflict type="erroneous initiation">
        <sequence resource="EMBL-CDS" id="AAP98992"/>
    </conflict>
</comment>
<evidence type="ECO:0000255" key="1">
    <source>
        <dbReference type="HAMAP-Rule" id="MF_01807"/>
    </source>
</evidence>
<evidence type="ECO:0000255" key="2">
    <source>
        <dbReference type="PROSITE-ProRule" id="PRU01246"/>
    </source>
</evidence>
<evidence type="ECO:0000255" key="3">
    <source>
        <dbReference type="PROSITE-ProRule" id="PRU01248"/>
    </source>
</evidence>
<evidence type="ECO:0000305" key="4"/>
<reference key="1">
    <citation type="journal article" date="1999" name="Nat. Genet.">
        <title>Comparative genomes of Chlamydia pneumoniae and C. trachomatis.</title>
        <authorList>
            <person name="Kalman S."/>
            <person name="Mitchell W.P."/>
            <person name="Marathe R."/>
            <person name="Lammel C.J."/>
            <person name="Fan J."/>
            <person name="Hyman R.W."/>
            <person name="Olinger L."/>
            <person name="Grimwood J."/>
            <person name="Davis R.W."/>
            <person name="Stephens R.S."/>
        </authorList>
    </citation>
    <scope>NUCLEOTIDE SEQUENCE [LARGE SCALE GENOMIC DNA]</scope>
    <source>
        <strain>CWL029</strain>
    </source>
</reference>
<reference key="2">
    <citation type="journal article" date="2000" name="Nucleic Acids Res.">
        <title>Genome sequences of Chlamydia trachomatis MoPn and Chlamydia pneumoniae AR39.</title>
        <authorList>
            <person name="Read T.D."/>
            <person name="Brunham R.C."/>
            <person name="Shen C."/>
            <person name="Gill S.R."/>
            <person name="Heidelberg J.F."/>
            <person name="White O."/>
            <person name="Hickey E.K."/>
            <person name="Peterson J.D."/>
            <person name="Utterback T.R."/>
            <person name="Berry K.J."/>
            <person name="Bass S."/>
            <person name="Linher K.D."/>
            <person name="Weidman J.F."/>
            <person name="Khouri H.M."/>
            <person name="Craven B."/>
            <person name="Bowman C."/>
            <person name="Dodson R.J."/>
            <person name="Gwinn M.L."/>
            <person name="Nelson W.C."/>
            <person name="DeBoy R.T."/>
            <person name="Kolonay J.F."/>
            <person name="McClarty G."/>
            <person name="Salzberg S.L."/>
            <person name="Eisen J.A."/>
            <person name="Fraser C.M."/>
        </authorList>
    </citation>
    <scope>NUCLEOTIDE SEQUENCE [LARGE SCALE GENOMIC DNA]</scope>
    <source>
        <strain>AR39</strain>
    </source>
</reference>
<reference key="3">
    <citation type="journal article" date="2000" name="Nucleic Acids Res.">
        <title>Comparison of whole genome sequences of Chlamydia pneumoniae J138 from Japan and CWL029 from USA.</title>
        <authorList>
            <person name="Shirai M."/>
            <person name="Hirakawa H."/>
            <person name="Kimoto M."/>
            <person name="Tabuchi M."/>
            <person name="Kishi F."/>
            <person name="Ouchi K."/>
            <person name="Shiba T."/>
            <person name="Ishii K."/>
            <person name="Hattori M."/>
            <person name="Kuhara S."/>
            <person name="Nakazawa T."/>
        </authorList>
    </citation>
    <scope>NUCLEOTIDE SEQUENCE [LARGE SCALE GENOMIC DNA]</scope>
    <source>
        <strain>J138</strain>
    </source>
</reference>
<reference key="4">
    <citation type="submission" date="2002-05" db="EMBL/GenBank/DDBJ databases">
        <title>The genome sequence of Chlamydia pneumoniae TW183 and comparison with other Chlamydia strains based on whole genome sequence analysis.</title>
        <authorList>
            <person name="Geng M.M."/>
            <person name="Schuhmacher A."/>
            <person name="Muehldorfer I."/>
            <person name="Bensch K.W."/>
            <person name="Schaefer K.P."/>
            <person name="Schneider S."/>
            <person name="Pohl T."/>
            <person name="Essig A."/>
            <person name="Marre R."/>
            <person name="Melchers K."/>
        </authorList>
    </citation>
    <scope>NUCLEOTIDE SEQUENCE [LARGE SCALE GENOMIC DNA]</scope>
    <source>
        <strain>TW-183</strain>
    </source>
</reference>
<feature type="chain" id="PRO_0000095380" description="Tyrosine recombinase XerD">
    <location>
        <begin position="1"/>
        <end position="301"/>
    </location>
</feature>
<feature type="domain" description="Core-binding (CB)" evidence="3">
    <location>
        <begin position="7"/>
        <end position="90"/>
    </location>
</feature>
<feature type="domain" description="Tyr recombinase" evidence="2">
    <location>
        <begin position="109"/>
        <end position="294"/>
    </location>
</feature>
<feature type="active site" evidence="1">
    <location>
        <position position="153"/>
    </location>
</feature>
<feature type="active site" evidence="1">
    <location>
        <position position="175"/>
    </location>
</feature>
<feature type="active site" evidence="1">
    <location>
        <position position="246"/>
    </location>
</feature>
<feature type="active site" evidence="1">
    <location>
        <position position="249"/>
    </location>
</feature>
<feature type="active site" evidence="1">
    <location>
        <position position="272"/>
    </location>
</feature>
<feature type="active site" description="O-(3'-phospho-DNA)-tyrosine intermediate" evidence="1">
    <location>
        <position position="281"/>
    </location>
</feature>
<name>XERD_CHLPN</name>
<dbReference type="EMBL" id="AE001363">
    <property type="protein sequence ID" value="AAD19161.1"/>
    <property type="molecule type" value="Genomic_DNA"/>
</dbReference>
<dbReference type="EMBL" id="AE002161">
    <property type="protein sequence ID" value="AAF38621.1"/>
    <property type="molecule type" value="Genomic_DNA"/>
</dbReference>
<dbReference type="EMBL" id="BA000008">
    <property type="protein sequence ID" value="BAA99231.1"/>
    <property type="molecule type" value="Genomic_DNA"/>
</dbReference>
<dbReference type="EMBL" id="AE009440">
    <property type="protein sequence ID" value="AAP98992.1"/>
    <property type="status" value="ALT_INIT"/>
    <property type="molecule type" value="Genomic_DNA"/>
</dbReference>
<dbReference type="PIR" id="B72005">
    <property type="entry name" value="B72005"/>
</dbReference>
<dbReference type="PIR" id="E86618">
    <property type="entry name" value="E86618"/>
</dbReference>
<dbReference type="RefSeq" id="NP_225218.1">
    <property type="nucleotide sequence ID" value="NC_000922.1"/>
</dbReference>
<dbReference type="RefSeq" id="WP_010883657.1">
    <property type="nucleotide sequence ID" value="NZ_LN847257.1"/>
</dbReference>
<dbReference type="SMR" id="Q9Z6N5"/>
<dbReference type="STRING" id="406984.CPK_ORF00450"/>
<dbReference type="GeneID" id="45051082"/>
<dbReference type="KEGG" id="cpa:CP_0828"/>
<dbReference type="KEGG" id="cpj:xerD"/>
<dbReference type="KEGG" id="cpn:CPn_1024"/>
<dbReference type="KEGG" id="cpt:CpB1063"/>
<dbReference type="PATRIC" id="fig|115713.3.peg.1122"/>
<dbReference type="eggNOG" id="COG4974">
    <property type="taxonomic scope" value="Bacteria"/>
</dbReference>
<dbReference type="HOGENOM" id="CLU_027562_9_6_0"/>
<dbReference type="OrthoDB" id="9801717at2"/>
<dbReference type="Proteomes" id="UP000000583">
    <property type="component" value="Chromosome"/>
</dbReference>
<dbReference type="Proteomes" id="UP000000801">
    <property type="component" value="Chromosome"/>
</dbReference>
<dbReference type="GO" id="GO:0005737">
    <property type="term" value="C:cytoplasm"/>
    <property type="evidence" value="ECO:0007669"/>
    <property type="project" value="UniProtKB-SubCell"/>
</dbReference>
<dbReference type="GO" id="GO:0003677">
    <property type="term" value="F:DNA binding"/>
    <property type="evidence" value="ECO:0007669"/>
    <property type="project" value="UniProtKB-KW"/>
</dbReference>
<dbReference type="GO" id="GO:0009037">
    <property type="term" value="F:tyrosine-based site-specific recombinase activity"/>
    <property type="evidence" value="ECO:0007669"/>
    <property type="project" value="UniProtKB-UniRule"/>
</dbReference>
<dbReference type="GO" id="GO:0051301">
    <property type="term" value="P:cell division"/>
    <property type="evidence" value="ECO:0007669"/>
    <property type="project" value="UniProtKB-KW"/>
</dbReference>
<dbReference type="GO" id="GO:0007059">
    <property type="term" value="P:chromosome segregation"/>
    <property type="evidence" value="ECO:0007669"/>
    <property type="project" value="UniProtKB-UniRule"/>
</dbReference>
<dbReference type="GO" id="GO:0006313">
    <property type="term" value="P:DNA transposition"/>
    <property type="evidence" value="ECO:0007669"/>
    <property type="project" value="UniProtKB-UniRule"/>
</dbReference>
<dbReference type="CDD" id="cd00798">
    <property type="entry name" value="INT_XerDC_C"/>
    <property type="match status" value="1"/>
</dbReference>
<dbReference type="Gene3D" id="1.10.150.130">
    <property type="match status" value="1"/>
</dbReference>
<dbReference type="Gene3D" id="1.10.443.10">
    <property type="entry name" value="Intergrase catalytic core"/>
    <property type="match status" value="1"/>
</dbReference>
<dbReference type="HAMAP" id="MF_01808">
    <property type="entry name" value="Recomb_XerC_XerD"/>
    <property type="match status" value="1"/>
</dbReference>
<dbReference type="HAMAP" id="MF_01807">
    <property type="entry name" value="Recomb_XerD"/>
    <property type="match status" value="1"/>
</dbReference>
<dbReference type="InterPro" id="IPR044068">
    <property type="entry name" value="CB"/>
</dbReference>
<dbReference type="InterPro" id="IPR011010">
    <property type="entry name" value="DNA_brk_join_enz"/>
</dbReference>
<dbReference type="InterPro" id="IPR013762">
    <property type="entry name" value="Integrase-like_cat_sf"/>
</dbReference>
<dbReference type="InterPro" id="IPR002104">
    <property type="entry name" value="Integrase_catalytic"/>
</dbReference>
<dbReference type="InterPro" id="IPR010998">
    <property type="entry name" value="Integrase_recombinase_N"/>
</dbReference>
<dbReference type="InterPro" id="IPR004107">
    <property type="entry name" value="Integrase_SAM-like_N"/>
</dbReference>
<dbReference type="InterPro" id="IPR011932">
    <property type="entry name" value="Recomb_XerD"/>
</dbReference>
<dbReference type="InterPro" id="IPR023009">
    <property type="entry name" value="Tyrosine_recombinase_XerC/XerD"/>
</dbReference>
<dbReference type="InterPro" id="IPR050090">
    <property type="entry name" value="Tyrosine_recombinase_XerCD"/>
</dbReference>
<dbReference type="NCBIfam" id="NF001399">
    <property type="entry name" value="PRK00283.1"/>
    <property type="match status" value="1"/>
</dbReference>
<dbReference type="PANTHER" id="PTHR30349">
    <property type="entry name" value="PHAGE INTEGRASE-RELATED"/>
    <property type="match status" value="1"/>
</dbReference>
<dbReference type="PANTHER" id="PTHR30349:SF81">
    <property type="entry name" value="TYROSINE RECOMBINASE XERC"/>
    <property type="match status" value="1"/>
</dbReference>
<dbReference type="Pfam" id="PF02899">
    <property type="entry name" value="Phage_int_SAM_1"/>
    <property type="match status" value="1"/>
</dbReference>
<dbReference type="Pfam" id="PF00589">
    <property type="entry name" value="Phage_integrase"/>
    <property type="match status" value="1"/>
</dbReference>
<dbReference type="SUPFAM" id="SSF56349">
    <property type="entry name" value="DNA breaking-rejoining enzymes"/>
    <property type="match status" value="1"/>
</dbReference>
<dbReference type="SUPFAM" id="SSF47823">
    <property type="entry name" value="lambda integrase-like, N-terminal domain"/>
    <property type="match status" value="1"/>
</dbReference>
<dbReference type="PROSITE" id="PS51900">
    <property type="entry name" value="CB"/>
    <property type="match status" value="1"/>
</dbReference>
<dbReference type="PROSITE" id="PS51898">
    <property type="entry name" value="TYR_RECOMBINASE"/>
    <property type="match status" value="1"/>
</dbReference>
<keyword id="KW-0131">Cell cycle</keyword>
<keyword id="KW-0132">Cell division</keyword>
<keyword id="KW-0159">Chromosome partition</keyword>
<keyword id="KW-0963">Cytoplasm</keyword>
<keyword id="KW-0229">DNA integration</keyword>
<keyword id="KW-0233">DNA recombination</keyword>
<keyword id="KW-0238">DNA-binding</keyword>
<accession>Q9Z6N5</accession>
<organism>
    <name type="scientific">Chlamydia pneumoniae</name>
    <name type="common">Chlamydophila pneumoniae</name>
    <dbReference type="NCBI Taxonomy" id="83558"/>
    <lineage>
        <taxon>Bacteria</taxon>
        <taxon>Pseudomonadati</taxon>
        <taxon>Chlamydiota</taxon>
        <taxon>Chlamydiia</taxon>
        <taxon>Chlamydiales</taxon>
        <taxon>Chlamydiaceae</taxon>
        <taxon>Chlamydia/Chlamydophila group</taxon>
        <taxon>Chlamydia</taxon>
    </lineage>
</organism>
<sequence length="301" mass="34525">MTMPSTQFHTTILEQFSLFLSVDRGLCQQSIAAYRQDISSFLTISAISSPQDISQNSVYIFAEELYRRKEAETTLARRLIALKVFFLFLKDQQLLPYPPIIEHPKIWKRLPSVLTPQEVDALLAVPLQMEKNPRHLAFRDTAILHTLYSTGVRVSELCDLRLGHVSDDCIRVTGKGSKTRLVPLGSRAREAIDAYLCPFRDQYQKKNPHEDHLFLSTRGHKLERSCVWRRIHNYAKQVTSKPVSPHSLRHAFATHLLDNKADLRVIQEMLGHARIASTEVYTHVAADSLIEKFLAHHPRNL</sequence>